<gene>
    <name type="primary">isiB</name>
    <name type="ordered locus">Synpcc7942_1541</name>
</gene>
<accession>P10340</accession>
<accession>Q31MZ8</accession>
<protein>
    <recommendedName>
        <fullName>Flavodoxin</fullName>
    </recommendedName>
</protein>
<dbReference type="EMBL" id="M19116">
    <property type="protein sequence ID" value="AAA22050.1"/>
    <property type="molecule type" value="Genomic_DNA"/>
</dbReference>
<dbReference type="EMBL" id="CP000100">
    <property type="protein sequence ID" value="ABB57571.1"/>
    <property type="molecule type" value="Genomic_DNA"/>
</dbReference>
<dbReference type="PDB" id="1CZH">
    <property type="method" value="X-ray"/>
    <property type="resolution" value="1.86 A"/>
    <property type="chains" value="A=2-170"/>
</dbReference>
<dbReference type="PDB" id="1CZK">
    <property type="method" value="X-ray"/>
    <property type="resolution" value="1.90 A"/>
    <property type="chains" value="A=2-170"/>
</dbReference>
<dbReference type="PDB" id="1CZL">
    <property type="method" value="X-ray"/>
    <property type="resolution" value="1.80 A"/>
    <property type="chains" value="A=2-170"/>
</dbReference>
<dbReference type="PDB" id="1CZN">
    <property type="method" value="X-ray"/>
    <property type="resolution" value="1.70 A"/>
    <property type="chains" value="A=2-170"/>
</dbReference>
<dbReference type="PDB" id="1CZO">
    <property type="method" value="X-ray"/>
    <property type="resolution" value="1.85 A"/>
    <property type="chains" value="A=2-170"/>
</dbReference>
<dbReference type="PDB" id="1CZR">
    <property type="method" value="X-ray"/>
    <property type="resolution" value="1.90 A"/>
    <property type="chains" value="A=2-170"/>
</dbReference>
<dbReference type="PDB" id="1CZU">
    <property type="method" value="X-ray"/>
    <property type="resolution" value="2.00 A"/>
    <property type="chains" value="A=2-170"/>
</dbReference>
<dbReference type="PDB" id="1D03">
    <property type="method" value="X-ray"/>
    <property type="resolution" value="1.85 A"/>
    <property type="chains" value="A=2-170"/>
</dbReference>
<dbReference type="PDB" id="1D04">
    <property type="method" value="X-ray"/>
    <property type="resolution" value="1.85 A"/>
    <property type="chains" value="A=2-170"/>
</dbReference>
<dbReference type="PDB" id="1OFV">
    <property type="method" value="X-ray"/>
    <property type="resolution" value="1.70 A"/>
    <property type="chains" value="A=2-170"/>
</dbReference>
<dbReference type="PDB" id="6KIF">
    <property type="method" value="EM"/>
    <property type="resolution" value="3.30 A"/>
    <property type="chains" value="P/X/p=2-170"/>
</dbReference>
<dbReference type="PDB" id="8HGQ">
    <property type="method" value="X-ray"/>
    <property type="resolution" value="2.09 A"/>
    <property type="chains" value="A=2-170"/>
</dbReference>
<dbReference type="PDB" id="8HGR">
    <property type="method" value="X-ray"/>
    <property type="resolution" value="1.84 A"/>
    <property type="chains" value="A=2-170"/>
</dbReference>
<dbReference type="PDBsum" id="1CZH"/>
<dbReference type="PDBsum" id="1CZK"/>
<dbReference type="PDBsum" id="1CZL"/>
<dbReference type="PDBsum" id="1CZN"/>
<dbReference type="PDBsum" id="1CZO"/>
<dbReference type="PDBsum" id="1CZR"/>
<dbReference type="PDBsum" id="1CZU"/>
<dbReference type="PDBsum" id="1D03"/>
<dbReference type="PDBsum" id="1D04"/>
<dbReference type="PDBsum" id="1OFV"/>
<dbReference type="PDBsum" id="6KIF"/>
<dbReference type="PDBsum" id="8HGQ"/>
<dbReference type="PDBsum" id="8HGR"/>
<dbReference type="BMRB" id="P10340"/>
<dbReference type="EMDB" id="EMD-9994"/>
<dbReference type="SMR" id="P10340"/>
<dbReference type="STRING" id="1140.Synpcc7942_1541"/>
<dbReference type="DrugBank" id="DB03247">
    <property type="generic name" value="Flavin mononucleotide"/>
</dbReference>
<dbReference type="PaxDb" id="1140-Synpcc7942_1541"/>
<dbReference type="KEGG" id="syf:Synpcc7942_1541"/>
<dbReference type="eggNOG" id="COG0716">
    <property type="taxonomic scope" value="Bacteria"/>
</dbReference>
<dbReference type="HOGENOM" id="CLU_051402_1_0_3"/>
<dbReference type="OrthoDB" id="9790745at2"/>
<dbReference type="BioCyc" id="SYNEL:SYNPCC7942_1541-MONOMER"/>
<dbReference type="EvolutionaryTrace" id="P10340"/>
<dbReference type="Proteomes" id="UP000889800">
    <property type="component" value="Chromosome"/>
</dbReference>
<dbReference type="GO" id="GO:0009055">
    <property type="term" value="F:electron transfer activity"/>
    <property type="evidence" value="ECO:0007669"/>
    <property type="project" value="InterPro"/>
</dbReference>
<dbReference type="GO" id="GO:0010181">
    <property type="term" value="F:FMN binding"/>
    <property type="evidence" value="ECO:0007669"/>
    <property type="project" value="InterPro"/>
</dbReference>
<dbReference type="Gene3D" id="3.40.50.360">
    <property type="match status" value="1"/>
</dbReference>
<dbReference type="InterPro" id="IPR050619">
    <property type="entry name" value="Flavodoxin"/>
</dbReference>
<dbReference type="InterPro" id="IPR008254">
    <property type="entry name" value="Flavodoxin/NO_synth"/>
</dbReference>
<dbReference type="InterPro" id="IPR001226">
    <property type="entry name" value="Flavodoxin_CS"/>
</dbReference>
<dbReference type="InterPro" id="IPR010086">
    <property type="entry name" value="Flavodoxin_lc"/>
</dbReference>
<dbReference type="InterPro" id="IPR029039">
    <property type="entry name" value="Flavoprotein-like_sf"/>
</dbReference>
<dbReference type="NCBIfam" id="TIGR01752">
    <property type="entry name" value="flav_long"/>
    <property type="match status" value="1"/>
</dbReference>
<dbReference type="NCBIfam" id="NF006736">
    <property type="entry name" value="PRK09267.1-2"/>
    <property type="match status" value="1"/>
</dbReference>
<dbReference type="NCBIfam" id="NF006738">
    <property type="entry name" value="PRK09267.1-4"/>
    <property type="match status" value="1"/>
</dbReference>
<dbReference type="NCBIfam" id="NF006739">
    <property type="entry name" value="PRK09267.1-5"/>
    <property type="match status" value="1"/>
</dbReference>
<dbReference type="PANTHER" id="PTHR42809:SF1">
    <property type="entry name" value="FLAVODOXIN 1"/>
    <property type="match status" value="1"/>
</dbReference>
<dbReference type="PANTHER" id="PTHR42809">
    <property type="entry name" value="FLAVODOXIN 2"/>
    <property type="match status" value="1"/>
</dbReference>
<dbReference type="Pfam" id="PF00258">
    <property type="entry name" value="Flavodoxin_1"/>
    <property type="match status" value="1"/>
</dbReference>
<dbReference type="PIRSF" id="PIRSF038996">
    <property type="entry name" value="FldA"/>
    <property type="match status" value="1"/>
</dbReference>
<dbReference type="SUPFAM" id="SSF52218">
    <property type="entry name" value="Flavoproteins"/>
    <property type="match status" value="1"/>
</dbReference>
<dbReference type="PROSITE" id="PS00201">
    <property type="entry name" value="FLAVODOXIN"/>
    <property type="match status" value="1"/>
</dbReference>
<dbReference type="PROSITE" id="PS50902">
    <property type="entry name" value="FLAVODOXIN_LIKE"/>
    <property type="match status" value="1"/>
</dbReference>
<reference key="1">
    <citation type="journal article" date="1988" name="J. Bacteriol.">
        <title>Isolation, sequence analysis, and transcriptional studies of the flavodoxin gene from Anacystis nidulans R2.</title>
        <authorList>
            <person name="Laudenbach D.E."/>
            <person name="Reith M.E."/>
            <person name="Straus N.A."/>
        </authorList>
    </citation>
    <scope>NUCLEOTIDE SEQUENCE [GENOMIC DNA]</scope>
</reference>
<reference key="2">
    <citation type="submission" date="2005-08" db="EMBL/GenBank/DDBJ databases">
        <title>Complete sequence of chromosome 1 of Synechococcus elongatus PCC 7942.</title>
        <authorList>
            <consortium name="US DOE Joint Genome Institute"/>
            <person name="Copeland A."/>
            <person name="Lucas S."/>
            <person name="Lapidus A."/>
            <person name="Barry K."/>
            <person name="Detter J.C."/>
            <person name="Glavina T."/>
            <person name="Hammon N."/>
            <person name="Israni S."/>
            <person name="Pitluck S."/>
            <person name="Schmutz J."/>
            <person name="Larimer F."/>
            <person name="Land M."/>
            <person name="Kyrpides N."/>
            <person name="Lykidis A."/>
            <person name="Golden S."/>
            <person name="Richardson P."/>
        </authorList>
    </citation>
    <scope>NUCLEOTIDE SEQUENCE [LARGE SCALE GENOMIC DNA]</scope>
    <source>
        <strain>ATCC 33912 / PCC 7942 / FACHB-805</strain>
    </source>
</reference>
<reference key="3">
    <citation type="journal article" date="1983" name="J. Mol. Biol.">
        <title>Structure of oxidized flavodoxin from Anacystis nidulans.</title>
        <authorList>
            <person name="Smith W.W."/>
            <person name="Pattridge K.A."/>
            <person name="Ludwig M.L."/>
            <person name="Petsko G.A."/>
            <person name="Tsernoglou D."/>
            <person name="Tanaka M."/>
            <person name="Yasunobu K.T."/>
        </authorList>
    </citation>
    <scope>PROTEIN SEQUENCE OF 2-56</scope>
    <scope>X-RAY CRYSTALLOGRAPHY (2.5 ANGSTROMS)</scope>
</reference>
<reference key="4">
    <citation type="journal article" date="1999" name="J. Mol. Biol.">
        <title>Refined structures of oxidized flavodoxin from Anacystis nidulans.</title>
        <authorList>
            <person name="Drennan C.L."/>
            <person name="Pattridge K.A."/>
            <person name="Weber C.H."/>
            <person name="Metzger A.L."/>
            <person name="Hoover D.M."/>
            <person name="Ludwig M.L."/>
        </authorList>
    </citation>
    <scope>X-RAY CRYSTALLOGRAPHY (1.7 ANGSTROMS)</scope>
</reference>
<reference key="5">
    <citation type="journal article" date="1999" name="J. Mol. Biol.">
        <title>Comparisons of wild-type and mutant flavodoxins from Anacystis nidulans. Structural determinants of the redox potentials.</title>
        <authorList>
            <person name="Hoover D.M."/>
            <person name="Drennan C.L."/>
            <person name="Metzger A.L."/>
            <person name="Osborne C."/>
            <person name="Weber C.H."/>
            <person name="Pattridge K.A."/>
            <person name="Ludwig M.L."/>
        </authorList>
    </citation>
    <scope>X-RAY CRYSTALLOGRAPHY (1.86 ANGSTROMS)</scope>
</reference>
<reference key="6">
    <citation type="journal article" date="1991" name="Biochemistry">
        <title>1H and 15N resonance assignments of oxidized flavodoxin from Anacystis nidulans with 3D NMR.</title>
        <authorList>
            <person name="Clubb R.T."/>
            <person name="Thanabal V."/>
            <person name="Osborne C."/>
            <person name="Wagner G."/>
        </authorList>
    </citation>
    <scope>STRUCTURE BY NMR</scope>
</reference>
<name>FLAV_SYNE7</name>
<keyword id="KW-0002">3D-structure</keyword>
<keyword id="KW-0903">Direct protein sequencing</keyword>
<keyword id="KW-0249">Electron transport</keyword>
<keyword id="KW-0285">Flavoprotein</keyword>
<keyword id="KW-0288">FMN</keyword>
<keyword id="KW-1185">Reference proteome</keyword>
<keyword id="KW-0346">Stress response</keyword>
<keyword id="KW-0813">Transport</keyword>
<proteinExistence type="evidence at protein level"/>
<feature type="initiator methionine" description="Removed" evidence="2">
    <location>
        <position position="1"/>
    </location>
</feature>
<feature type="chain" id="PRO_0000171644" description="Flavodoxin">
    <location>
        <begin position="2"/>
        <end position="170"/>
    </location>
</feature>
<feature type="domain" description="Flavodoxin-like" evidence="1">
    <location>
        <begin position="4"/>
        <end position="165"/>
    </location>
</feature>
<feature type="sequence conflict" description="In Ref. 3; AA sequence." evidence="3" ref="3">
    <original>C</original>
    <variation>S</variation>
    <location>
        <position position="55"/>
    </location>
</feature>
<feature type="strand" evidence="5">
    <location>
        <begin position="4"/>
        <end position="8"/>
    </location>
</feature>
<feature type="strand" evidence="5">
    <location>
        <begin position="11"/>
        <end position="13"/>
    </location>
</feature>
<feature type="helix" evidence="5">
    <location>
        <begin position="14"/>
        <end position="26"/>
    </location>
</feature>
<feature type="turn" evidence="5">
    <location>
        <begin position="29"/>
        <end position="31"/>
    </location>
</feature>
<feature type="strand" evidence="5">
    <location>
        <begin position="32"/>
        <end position="36"/>
    </location>
</feature>
<feature type="helix" evidence="5">
    <location>
        <begin position="37"/>
        <end position="39"/>
    </location>
</feature>
<feature type="helix" evidence="5">
    <location>
        <begin position="42"/>
        <end position="47"/>
    </location>
</feature>
<feature type="strand" evidence="5">
    <location>
        <begin position="49"/>
        <end position="54"/>
    </location>
</feature>
<feature type="turn" evidence="5">
    <location>
        <begin position="59"/>
        <end position="61"/>
    </location>
</feature>
<feature type="helix" evidence="5">
    <location>
        <begin position="65"/>
        <end position="70"/>
    </location>
</feature>
<feature type="helix" evidence="5">
    <location>
        <begin position="71"/>
        <end position="76"/>
    </location>
</feature>
<feature type="strand" evidence="5">
    <location>
        <begin position="83"/>
        <end position="89"/>
    </location>
</feature>
<feature type="turn" evidence="5">
    <location>
        <begin position="92"/>
        <end position="97"/>
    </location>
</feature>
<feature type="helix" evidence="5">
    <location>
        <begin position="101"/>
        <end position="112"/>
    </location>
</feature>
<feature type="strand" evidence="4">
    <location>
        <begin position="121"/>
        <end position="123"/>
    </location>
</feature>
<feature type="strand" evidence="5">
    <location>
        <begin position="138"/>
        <end position="144"/>
    </location>
</feature>
<feature type="turn" evidence="5">
    <location>
        <begin position="146"/>
        <end position="148"/>
    </location>
</feature>
<feature type="helix" evidence="5">
    <location>
        <begin position="150"/>
        <end position="152"/>
    </location>
</feature>
<feature type="helix" evidence="5">
    <location>
        <begin position="153"/>
        <end position="167"/>
    </location>
</feature>
<comment type="function">
    <text>Low-potential electron donor to a number of redox enzymes.</text>
</comment>
<comment type="cofactor">
    <cofactor>
        <name>FMN</name>
        <dbReference type="ChEBI" id="CHEBI:58210"/>
    </cofactor>
</comment>
<comment type="induction">
    <text>By iron stress.</text>
</comment>
<comment type="similarity">
    <text evidence="3">Belongs to the flavodoxin family.</text>
</comment>
<organism>
    <name type="scientific">Synechococcus elongatus (strain ATCC 33912 / PCC 7942 / FACHB-805)</name>
    <name type="common">Anacystis nidulans R2</name>
    <dbReference type="NCBI Taxonomy" id="1140"/>
    <lineage>
        <taxon>Bacteria</taxon>
        <taxon>Bacillati</taxon>
        <taxon>Cyanobacteriota</taxon>
        <taxon>Cyanophyceae</taxon>
        <taxon>Synechococcales</taxon>
        <taxon>Synechococcaceae</taxon>
        <taxon>Synechococcus</taxon>
    </lineage>
</organism>
<sequence>MAKIGLFYGTQTGVTQTIAESIQQEFGGESIVDLNDIANADASDLNAYDYLIIGCPTWNVGELQSDWEGIYDDLDSVNFQGKKVAYFGAGDQVGYSDNFQDAMGILEEKISSLGSQTVGYWPIEGYDFNESKAVRNNQFVGLAIDEDNQPDLTKNRIKTWVSQLKSEFGL</sequence>
<evidence type="ECO:0000255" key="1">
    <source>
        <dbReference type="PROSITE-ProRule" id="PRU00088"/>
    </source>
</evidence>
<evidence type="ECO:0000269" key="2">
    <source>
    </source>
</evidence>
<evidence type="ECO:0000305" key="3"/>
<evidence type="ECO:0007829" key="4">
    <source>
        <dbReference type="PDB" id="1CZL"/>
    </source>
</evidence>
<evidence type="ECO:0007829" key="5">
    <source>
        <dbReference type="PDB" id="1CZN"/>
    </source>
</evidence>